<organism>
    <name type="scientific">Neisseria meningitidis serogroup B (strain ATCC BAA-335 / MC58)</name>
    <dbReference type="NCBI Taxonomy" id="122586"/>
    <lineage>
        <taxon>Bacteria</taxon>
        <taxon>Pseudomonadati</taxon>
        <taxon>Pseudomonadota</taxon>
        <taxon>Betaproteobacteria</taxon>
        <taxon>Neisseriales</taxon>
        <taxon>Neisseriaceae</taxon>
        <taxon>Neisseria</taxon>
    </lineage>
</organism>
<reference key="1">
    <citation type="journal article" date="2000" name="Science">
        <title>Complete genome sequence of Neisseria meningitidis serogroup B strain MC58.</title>
        <authorList>
            <person name="Tettelin H."/>
            <person name="Saunders N.J."/>
            <person name="Heidelberg J.F."/>
            <person name="Jeffries A.C."/>
            <person name="Nelson K.E."/>
            <person name="Eisen J.A."/>
            <person name="Ketchum K.A."/>
            <person name="Hood D.W."/>
            <person name="Peden J.F."/>
            <person name="Dodson R.J."/>
            <person name="Nelson W.C."/>
            <person name="Gwinn M.L."/>
            <person name="DeBoy R.T."/>
            <person name="Peterson J.D."/>
            <person name="Hickey E.K."/>
            <person name="Haft D.H."/>
            <person name="Salzberg S.L."/>
            <person name="White O."/>
            <person name="Fleischmann R.D."/>
            <person name="Dougherty B.A."/>
            <person name="Mason T.M."/>
            <person name="Ciecko A."/>
            <person name="Parksey D.S."/>
            <person name="Blair E."/>
            <person name="Cittone H."/>
            <person name="Clark E.B."/>
            <person name="Cotton M.D."/>
            <person name="Utterback T.R."/>
            <person name="Khouri H.M."/>
            <person name="Qin H."/>
            <person name="Vamathevan J.J."/>
            <person name="Gill J."/>
            <person name="Scarlato V."/>
            <person name="Masignani V."/>
            <person name="Pizza M."/>
            <person name="Grandi G."/>
            <person name="Sun L."/>
            <person name="Smith H.O."/>
            <person name="Fraser C.M."/>
            <person name="Moxon E.R."/>
            <person name="Rappuoli R."/>
            <person name="Venter J.C."/>
        </authorList>
    </citation>
    <scope>NUCLEOTIDE SEQUENCE [LARGE SCALE GENOMIC DNA]</scope>
    <source>
        <strain>ATCC BAA-335 / MC58</strain>
    </source>
</reference>
<protein>
    <recommendedName>
        <fullName evidence="1">Large ribosomal subunit protein uL16</fullName>
    </recommendedName>
    <alternativeName>
        <fullName evidence="2">50S ribosomal protein L16</fullName>
    </alternativeName>
</protein>
<keyword id="KW-1185">Reference proteome</keyword>
<keyword id="KW-0687">Ribonucleoprotein</keyword>
<keyword id="KW-0689">Ribosomal protein</keyword>
<keyword id="KW-0694">RNA-binding</keyword>
<keyword id="KW-0699">rRNA-binding</keyword>
<keyword id="KW-0820">tRNA-binding</keyword>
<comment type="function">
    <text evidence="1">Binds 23S rRNA and is also seen to make contacts with the A and possibly P site tRNAs.</text>
</comment>
<comment type="subunit">
    <text evidence="1">Part of the 50S ribosomal subunit.</text>
</comment>
<comment type="similarity">
    <text evidence="1">Belongs to the universal ribosomal protein uL16 family.</text>
</comment>
<feature type="chain" id="PRO_0000062153" description="Large ribosomal subunit protein uL16">
    <location>
        <begin position="1"/>
        <end position="138"/>
    </location>
</feature>
<name>RL16_NEIMB</name>
<gene>
    <name evidence="1" type="primary">rplP</name>
    <name type="ordered locus">NMB0149</name>
</gene>
<proteinExistence type="inferred from homology"/>
<sequence length="138" mass="15519">MLQPTRLKYRKQQKGRNTGIATRGNKVSFGEFGLKAVGRGRLTARQIEAARRAMTRHIKRGGRIWIRVFPDKPITEKPIQVRMGGGKGNVEYYIAEIKPGKVLYEMDGVPEELAREAFELAAAKLPIPTTFVVRQVGQ</sequence>
<evidence type="ECO:0000255" key="1">
    <source>
        <dbReference type="HAMAP-Rule" id="MF_01342"/>
    </source>
</evidence>
<evidence type="ECO:0000305" key="2"/>
<accession>Q7DDT4</accession>
<dbReference type="EMBL" id="AE002098">
    <property type="protein sequence ID" value="AAF40607.1"/>
    <property type="molecule type" value="Genomic_DNA"/>
</dbReference>
<dbReference type="RefSeq" id="NP_273207.1">
    <property type="nucleotide sequence ID" value="NC_003112.2"/>
</dbReference>
<dbReference type="RefSeq" id="WP_002215430.1">
    <property type="nucleotide sequence ID" value="NC_003112.2"/>
</dbReference>
<dbReference type="SMR" id="Q7DDT4"/>
<dbReference type="FunCoup" id="Q7DDT4">
    <property type="interactions" value="553"/>
</dbReference>
<dbReference type="STRING" id="122586.NMB0149"/>
<dbReference type="PaxDb" id="122586-NMB0149"/>
<dbReference type="GeneID" id="93387224"/>
<dbReference type="KEGG" id="nme:NMB0149"/>
<dbReference type="PATRIC" id="fig|122586.8.peg.190"/>
<dbReference type="HOGENOM" id="CLU_078858_2_1_4"/>
<dbReference type="InParanoid" id="Q7DDT4"/>
<dbReference type="OrthoDB" id="9802589at2"/>
<dbReference type="Proteomes" id="UP000000425">
    <property type="component" value="Chromosome"/>
</dbReference>
<dbReference type="GO" id="GO:0022625">
    <property type="term" value="C:cytosolic large ribosomal subunit"/>
    <property type="evidence" value="ECO:0000318"/>
    <property type="project" value="GO_Central"/>
</dbReference>
<dbReference type="GO" id="GO:0019843">
    <property type="term" value="F:rRNA binding"/>
    <property type="evidence" value="ECO:0000318"/>
    <property type="project" value="GO_Central"/>
</dbReference>
<dbReference type="GO" id="GO:0003735">
    <property type="term" value="F:structural constituent of ribosome"/>
    <property type="evidence" value="ECO:0000318"/>
    <property type="project" value="GO_Central"/>
</dbReference>
<dbReference type="GO" id="GO:0000049">
    <property type="term" value="F:tRNA binding"/>
    <property type="evidence" value="ECO:0007669"/>
    <property type="project" value="UniProtKB-KW"/>
</dbReference>
<dbReference type="GO" id="GO:0006412">
    <property type="term" value="P:translation"/>
    <property type="evidence" value="ECO:0007669"/>
    <property type="project" value="UniProtKB-UniRule"/>
</dbReference>
<dbReference type="CDD" id="cd01433">
    <property type="entry name" value="Ribosomal_L16_L10e"/>
    <property type="match status" value="1"/>
</dbReference>
<dbReference type="FunFam" id="3.90.1170.10:FF:000001">
    <property type="entry name" value="50S ribosomal protein L16"/>
    <property type="match status" value="1"/>
</dbReference>
<dbReference type="Gene3D" id="3.90.1170.10">
    <property type="entry name" value="Ribosomal protein L10e/L16"/>
    <property type="match status" value="1"/>
</dbReference>
<dbReference type="HAMAP" id="MF_01342">
    <property type="entry name" value="Ribosomal_uL16"/>
    <property type="match status" value="1"/>
</dbReference>
<dbReference type="InterPro" id="IPR047873">
    <property type="entry name" value="Ribosomal_uL16"/>
</dbReference>
<dbReference type="InterPro" id="IPR000114">
    <property type="entry name" value="Ribosomal_uL16_bact-type"/>
</dbReference>
<dbReference type="InterPro" id="IPR020798">
    <property type="entry name" value="Ribosomal_uL16_CS"/>
</dbReference>
<dbReference type="InterPro" id="IPR016180">
    <property type="entry name" value="Ribosomal_uL16_dom"/>
</dbReference>
<dbReference type="InterPro" id="IPR036920">
    <property type="entry name" value="Ribosomal_uL16_sf"/>
</dbReference>
<dbReference type="NCBIfam" id="TIGR01164">
    <property type="entry name" value="rplP_bact"/>
    <property type="match status" value="1"/>
</dbReference>
<dbReference type="PANTHER" id="PTHR12220">
    <property type="entry name" value="50S/60S RIBOSOMAL PROTEIN L16"/>
    <property type="match status" value="1"/>
</dbReference>
<dbReference type="PANTHER" id="PTHR12220:SF13">
    <property type="entry name" value="LARGE RIBOSOMAL SUBUNIT PROTEIN UL16M"/>
    <property type="match status" value="1"/>
</dbReference>
<dbReference type="Pfam" id="PF00252">
    <property type="entry name" value="Ribosomal_L16"/>
    <property type="match status" value="1"/>
</dbReference>
<dbReference type="PRINTS" id="PR00060">
    <property type="entry name" value="RIBOSOMALL16"/>
</dbReference>
<dbReference type="SUPFAM" id="SSF54686">
    <property type="entry name" value="Ribosomal protein L16p/L10e"/>
    <property type="match status" value="1"/>
</dbReference>
<dbReference type="PROSITE" id="PS00586">
    <property type="entry name" value="RIBOSOMAL_L16_1"/>
    <property type="match status" value="1"/>
</dbReference>